<comment type="function">
    <text evidence="1">Catalyzes the synthesis of the hydroxymethylpyrimidine phosphate (HMP-P) moiety of thiamine from aminoimidazole ribotide (AIR) in a radical S-adenosyl-L-methionine (SAM)-dependent reaction.</text>
</comment>
<comment type="catalytic activity">
    <reaction evidence="1">
        <text>5-amino-1-(5-phospho-beta-D-ribosyl)imidazole + S-adenosyl-L-methionine = 4-amino-2-methyl-5-(phosphooxymethyl)pyrimidine + CO + 5'-deoxyadenosine + formate + L-methionine + 3 H(+)</text>
        <dbReference type="Rhea" id="RHEA:24840"/>
        <dbReference type="ChEBI" id="CHEBI:15378"/>
        <dbReference type="ChEBI" id="CHEBI:15740"/>
        <dbReference type="ChEBI" id="CHEBI:17245"/>
        <dbReference type="ChEBI" id="CHEBI:17319"/>
        <dbReference type="ChEBI" id="CHEBI:57844"/>
        <dbReference type="ChEBI" id="CHEBI:58354"/>
        <dbReference type="ChEBI" id="CHEBI:59789"/>
        <dbReference type="ChEBI" id="CHEBI:137981"/>
        <dbReference type="EC" id="4.1.99.17"/>
    </reaction>
</comment>
<comment type="cofactor">
    <cofactor evidence="1">
        <name>[4Fe-4S] cluster</name>
        <dbReference type="ChEBI" id="CHEBI:49883"/>
    </cofactor>
    <text evidence="1">Binds 1 [4Fe-4S] cluster per subunit. The cluster is coordinated with 3 cysteines and an exchangeable S-adenosyl-L-methionine.</text>
</comment>
<comment type="pathway">
    <text evidence="1">Cofactor biosynthesis; thiamine diphosphate biosynthesis.</text>
</comment>
<comment type="similarity">
    <text evidence="1">Belongs to the ThiC family.</text>
</comment>
<dbReference type="EC" id="4.1.99.17" evidence="1"/>
<dbReference type="EMBL" id="CP000764">
    <property type="protein sequence ID" value="ABS23953.1"/>
    <property type="molecule type" value="Genomic_DNA"/>
</dbReference>
<dbReference type="RefSeq" id="WP_012096209.1">
    <property type="nucleotide sequence ID" value="NC_009674.1"/>
</dbReference>
<dbReference type="SMR" id="A7GUZ5"/>
<dbReference type="STRING" id="315749.Bcer98_3762"/>
<dbReference type="GeneID" id="33899005"/>
<dbReference type="KEGG" id="bcy:Bcer98_3762"/>
<dbReference type="eggNOG" id="COG0422">
    <property type="taxonomic scope" value="Bacteria"/>
</dbReference>
<dbReference type="HOGENOM" id="CLU_013181_2_1_9"/>
<dbReference type="OrthoDB" id="9805897at2"/>
<dbReference type="UniPathway" id="UPA00060"/>
<dbReference type="Proteomes" id="UP000002300">
    <property type="component" value="Chromosome"/>
</dbReference>
<dbReference type="GO" id="GO:0005829">
    <property type="term" value="C:cytosol"/>
    <property type="evidence" value="ECO:0007669"/>
    <property type="project" value="TreeGrafter"/>
</dbReference>
<dbReference type="GO" id="GO:0051539">
    <property type="term" value="F:4 iron, 4 sulfur cluster binding"/>
    <property type="evidence" value="ECO:0007669"/>
    <property type="project" value="UniProtKB-KW"/>
</dbReference>
<dbReference type="GO" id="GO:0016830">
    <property type="term" value="F:carbon-carbon lyase activity"/>
    <property type="evidence" value="ECO:0007669"/>
    <property type="project" value="InterPro"/>
</dbReference>
<dbReference type="GO" id="GO:0008270">
    <property type="term" value="F:zinc ion binding"/>
    <property type="evidence" value="ECO:0007669"/>
    <property type="project" value="UniProtKB-UniRule"/>
</dbReference>
<dbReference type="GO" id="GO:0009228">
    <property type="term" value="P:thiamine biosynthetic process"/>
    <property type="evidence" value="ECO:0007669"/>
    <property type="project" value="UniProtKB-KW"/>
</dbReference>
<dbReference type="GO" id="GO:0009229">
    <property type="term" value="P:thiamine diphosphate biosynthetic process"/>
    <property type="evidence" value="ECO:0007669"/>
    <property type="project" value="UniProtKB-UniRule"/>
</dbReference>
<dbReference type="FunFam" id="3.20.20.540:FF:000001">
    <property type="entry name" value="Phosphomethylpyrimidine synthase"/>
    <property type="match status" value="1"/>
</dbReference>
<dbReference type="Gene3D" id="6.10.250.620">
    <property type="match status" value="1"/>
</dbReference>
<dbReference type="Gene3D" id="3.20.20.540">
    <property type="entry name" value="Radical SAM ThiC family, central domain"/>
    <property type="match status" value="1"/>
</dbReference>
<dbReference type="HAMAP" id="MF_00089">
    <property type="entry name" value="ThiC"/>
    <property type="match status" value="1"/>
</dbReference>
<dbReference type="InterPro" id="IPR037509">
    <property type="entry name" value="ThiC"/>
</dbReference>
<dbReference type="InterPro" id="IPR025747">
    <property type="entry name" value="ThiC-associated_dom"/>
</dbReference>
<dbReference type="InterPro" id="IPR038521">
    <property type="entry name" value="ThiC/Bza_core_dom"/>
</dbReference>
<dbReference type="InterPro" id="IPR002817">
    <property type="entry name" value="ThiC/BzaA/B"/>
</dbReference>
<dbReference type="NCBIfam" id="NF006763">
    <property type="entry name" value="PRK09284.1"/>
    <property type="match status" value="1"/>
</dbReference>
<dbReference type="NCBIfam" id="NF009895">
    <property type="entry name" value="PRK13352.1"/>
    <property type="match status" value="1"/>
</dbReference>
<dbReference type="NCBIfam" id="TIGR00190">
    <property type="entry name" value="thiC"/>
    <property type="match status" value="1"/>
</dbReference>
<dbReference type="PANTHER" id="PTHR30557:SF1">
    <property type="entry name" value="PHOSPHOMETHYLPYRIMIDINE SYNTHASE, CHLOROPLASTIC"/>
    <property type="match status" value="1"/>
</dbReference>
<dbReference type="PANTHER" id="PTHR30557">
    <property type="entry name" value="THIAMINE BIOSYNTHESIS PROTEIN THIC"/>
    <property type="match status" value="1"/>
</dbReference>
<dbReference type="Pfam" id="PF13667">
    <property type="entry name" value="ThiC-associated"/>
    <property type="match status" value="1"/>
</dbReference>
<dbReference type="Pfam" id="PF01964">
    <property type="entry name" value="ThiC_Rad_SAM"/>
    <property type="match status" value="1"/>
</dbReference>
<dbReference type="SFLD" id="SFLDF00407">
    <property type="entry name" value="phosphomethylpyrimidine_syntha"/>
    <property type="match status" value="1"/>
</dbReference>
<dbReference type="SFLD" id="SFLDG01114">
    <property type="entry name" value="phosphomethylpyrimidine_syntha"/>
    <property type="match status" value="1"/>
</dbReference>
<dbReference type="SFLD" id="SFLDS00113">
    <property type="entry name" value="Radical_SAM_Phosphomethylpyrim"/>
    <property type="match status" value="1"/>
</dbReference>
<accession>A7GUZ5</accession>
<reference key="1">
    <citation type="journal article" date="2008" name="Chem. Biol. Interact.">
        <title>Extending the Bacillus cereus group genomics to putative food-borne pathogens of different toxicity.</title>
        <authorList>
            <person name="Lapidus A."/>
            <person name="Goltsman E."/>
            <person name="Auger S."/>
            <person name="Galleron N."/>
            <person name="Segurens B."/>
            <person name="Dossat C."/>
            <person name="Land M.L."/>
            <person name="Broussolle V."/>
            <person name="Brillard J."/>
            <person name="Guinebretiere M.-H."/>
            <person name="Sanchis V."/>
            <person name="Nguen-the C."/>
            <person name="Lereclus D."/>
            <person name="Richardson P."/>
            <person name="Wincker P."/>
            <person name="Weissenbach J."/>
            <person name="Ehrlich S.D."/>
            <person name="Sorokin A."/>
        </authorList>
    </citation>
    <scope>NUCLEOTIDE SEQUENCE [LARGE SCALE GENOMIC DNA]</scope>
    <source>
        <strain>DSM 22905 / CIP 110041 / 391-98 / NVH 391-98</strain>
    </source>
</reference>
<keyword id="KW-0004">4Fe-4S</keyword>
<keyword id="KW-0408">Iron</keyword>
<keyword id="KW-0411">Iron-sulfur</keyword>
<keyword id="KW-0456">Lyase</keyword>
<keyword id="KW-0479">Metal-binding</keyword>
<keyword id="KW-0949">S-adenosyl-L-methionine</keyword>
<keyword id="KW-0784">Thiamine biosynthesis</keyword>
<keyword id="KW-0862">Zinc</keyword>
<proteinExistence type="inferred from homology"/>
<organism>
    <name type="scientific">Bacillus cytotoxicus (strain DSM 22905 / CIP 110041 / 391-98 / NVH 391-98)</name>
    <dbReference type="NCBI Taxonomy" id="315749"/>
    <lineage>
        <taxon>Bacteria</taxon>
        <taxon>Bacillati</taxon>
        <taxon>Bacillota</taxon>
        <taxon>Bacilli</taxon>
        <taxon>Bacillales</taxon>
        <taxon>Bacillaceae</taxon>
        <taxon>Bacillus</taxon>
        <taxon>Bacillus cereus group</taxon>
    </lineage>
</organism>
<feature type="chain" id="PRO_1000075432" description="Phosphomethylpyrimidine synthase">
    <location>
        <begin position="1"/>
        <end position="586"/>
    </location>
</feature>
<feature type="region of interest" description="Disordered" evidence="2">
    <location>
        <begin position="38"/>
        <end position="59"/>
    </location>
</feature>
<feature type="region of interest" description="Disordered" evidence="2">
    <location>
        <begin position="92"/>
        <end position="114"/>
    </location>
</feature>
<feature type="compositionally biased region" description="Basic and acidic residues" evidence="2">
    <location>
        <begin position="92"/>
        <end position="102"/>
    </location>
</feature>
<feature type="binding site" evidence="1">
    <location>
        <position position="193"/>
    </location>
    <ligand>
        <name>substrate</name>
    </ligand>
</feature>
<feature type="binding site" evidence="1">
    <location>
        <position position="222"/>
    </location>
    <ligand>
        <name>substrate</name>
    </ligand>
</feature>
<feature type="binding site" evidence="1">
    <location>
        <position position="251"/>
    </location>
    <ligand>
        <name>substrate</name>
    </ligand>
</feature>
<feature type="binding site" evidence="1">
    <location>
        <position position="287"/>
    </location>
    <ligand>
        <name>substrate</name>
    </ligand>
</feature>
<feature type="binding site" evidence="1">
    <location>
        <begin position="307"/>
        <end position="309"/>
    </location>
    <ligand>
        <name>substrate</name>
    </ligand>
</feature>
<feature type="binding site" evidence="1">
    <location>
        <begin position="348"/>
        <end position="351"/>
    </location>
    <ligand>
        <name>substrate</name>
    </ligand>
</feature>
<feature type="binding site" evidence="1">
    <location>
        <position position="387"/>
    </location>
    <ligand>
        <name>substrate</name>
    </ligand>
</feature>
<feature type="binding site" evidence="1">
    <location>
        <position position="391"/>
    </location>
    <ligand>
        <name>Zn(2+)</name>
        <dbReference type="ChEBI" id="CHEBI:29105"/>
    </ligand>
</feature>
<feature type="binding site" evidence="1">
    <location>
        <position position="414"/>
    </location>
    <ligand>
        <name>substrate</name>
    </ligand>
</feature>
<feature type="binding site" evidence="1">
    <location>
        <position position="455"/>
    </location>
    <ligand>
        <name>Zn(2+)</name>
        <dbReference type="ChEBI" id="CHEBI:29105"/>
    </ligand>
</feature>
<feature type="binding site" evidence="1">
    <location>
        <position position="535"/>
    </location>
    <ligand>
        <name>[4Fe-4S] cluster</name>
        <dbReference type="ChEBI" id="CHEBI:49883"/>
        <note>4Fe-4S-S-AdoMet</note>
    </ligand>
</feature>
<feature type="binding site" evidence="1">
    <location>
        <position position="538"/>
    </location>
    <ligand>
        <name>[4Fe-4S] cluster</name>
        <dbReference type="ChEBI" id="CHEBI:49883"/>
        <note>4Fe-4S-S-AdoMet</note>
    </ligand>
</feature>
<feature type="binding site" evidence="1">
    <location>
        <position position="543"/>
    </location>
    <ligand>
        <name>[4Fe-4S] cluster</name>
        <dbReference type="ChEBI" id="CHEBI:49883"/>
        <note>4Fe-4S-S-AdoMet</note>
    </ligand>
</feature>
<evidence type="ECO:0000255" key="1">
    <source>
        <dbReference type="HAMAP-Rule" id="MF_00089"/>
    </source>
</evidence>
<evidence type="ECO:0000256" key="2">
    <source>
        <dbReference type="SAM" id="MobiDB-lite"/>
    </source>
</evidence>
<protein>
    <recommendedName>
        <fullName evidence="1">Phosphomethylpyrimidine synthase</fullName>
        <ecNumber evidence="1">4.1.99.17</ecNumber>
    </recommendedName>
    <alternativeName>
        <fullName evidence="1">Hydroxymethylpyrimidine phosphate synthase</fullName>
        <shortName evidence="1">HMP-P synthase</shortName>
        <shortName evidence="1">HMP-phosphate synthase</shortName>
        <shortName evidence="1">HMPP synthase</shortName>
    </alternativeName>
    <alternativeName>
        <fullName evidence="1">Thiamine biosynthesis protein ThiC</fullName>
    </alternativeName>
</protein>
<gene>
    <name evidence="1" type="primary">thiC</name>
    <name type="ordered locus">Bcer98_3762</name>
</gene>
<name>THIC_BACCN</name>
<sequence>MEQSVSAEQIELKSSLPGSKKVYVEGSREGMKVPMREIELSDTNGVPNSPIRVYDTSGPYTDPEYKVELEKGIPTPRRNWIIERGDVEEYEGREIKPEDDGVKAASNHTPVFPQMDRKPLRAKKGANVTQMHYARKGIITSEMEYVAIREGVEPEFVRKEIAEGRAILPANINHPEAEPMIIGRNFHVKVNANIGNSAVSSSIAEEVEKMTWATRWGADTIMDLSTGKNIHTTREWIIRNAPVPVGTVPIYQALEKVQGIAENLTWEVYRDTLIEQAEQGVDYFTIHAGVLLRYIPLTAKRMTGIVSRGGSIMAQWCLYHHKENFLYTHFEEICEIMKQYDVSFSLGDGLRPGSIADANDEAQFAELETLGELTKIAWKHDVQVMIEGPGHVPMHLIKENMEKEIDICQGAPFYTLGPLTTDIAPGYDHITSAIGAAMIGWFGTAMLCYVTPKEHLGLPNKDDVREGVITYKIAAHAADLAKGHKTAQQRDDALSKARFEFRWRDQFNLSLDPERAMEFHDETLPAEGAKTAHFCSMCGPKFCSMKISHDIREYAKENNLETTEAIEKGMKEKAKEFKEAGSHLYQ</sequence>